<accession>Q6CIJ2</accession>
<gene>
    <name type="primary">AEP1</name>
    <name type="ordered locus">KLLA0F26202g</name>
</gene>
<proteinExistence type="inferred from homology"/>
<reference key="1">
    <citation type="journal article" date="2004" name="Nature">
        <title>Genome evolution in yeasts.</title>
        <authorList>
            <person name="Dujon B."/>
            <person name="Sherman D."/>
            <person name="Fischer G."/>
            <person name="Durrens P."/>
            <person name="Casaregola S."/>
            <person name="Lafontaine I."/>
            <person name="de Montigny J."/>
            <person name="Marck C."/>
            <person name="Neuveglise C."/>
            <person name="Talla E."/>
            <person name="Goffard N."/>
            <person name="Frangeul L."/>
            <person name="Aigle M."/>
            <person name="Anthouard V."/>
            <person name="Babour A."/>
            <person name="Barbe V."/>
            <person name="Barnay S."/>
            <person name="Blanchin S."/>
            <person name="Beckerich J.-M."/>
            <person name="Beyne E."/>
            <person name="Bleykasten C."/>
            <person name="Boisrame A."/>
            <person name="Boyer J."/>
            <person name="Cattolico L."/>
            <person name="Confanioleri F."/>
            <person name="de Daruvar A."/>
            <person name="Despons L."/>
            <person name="Fabre E."/>
            <person name="Fairhead C."/>
            <person name="Ferry-Dumazet H."/>
            <person name="Groppi A."/>
            <person name="Hantraye F."/>
            <person name="Hennequin C."/>
            <person name="Jauniaux N."/>
            <person name="Joyet P."/>
            <person name="Kachouri R."/>
            <person name="Kerrest A."/>
            <person name="Koszul R."/>
            <person name="Lemaire M."/>
            <person name="Lesur I."/>
            <person name="Ma L."/>
            <person name="Muller H."/>
            <person name="Nicaud J.-M."/>
            <person name="Nikolski M."/>
            <person name="Oztas S."/>
            <person name="Ozier-Kalogeropoulos O."/>
            <person name="Pellenz S."/>
            <person name="Potier S."/>
            <person name="Richard G.-F."/>
            <person name="Straub M.-L."/>
            <person name="Suleau A."/>
            <person name="Swennen D."/>
            <person name="Tekaia F."/>
            <person name="Wesolowski-Louvel M."/>
            <person name="Westhof E."/>
            <person name="Wirth B."/>
            <person name="Zeniou-Meyer M."/>
            <person name="Zivanovic Y."/>
            <person name="Bolotin-Fukuhara M."/>
            <person name="Thierry A."/>
            <person name="Bouchier C."/>
            <person name="Caudron B."/>
            <person name="Scarpelli C."/>
            <person name="Gaillardin C."/>
            <person name="Weissenbach J."/>
            <person name="Wincker P."/>
            <person name="Souciet J.-L."/>
        </authorList>
    </citation>
    <scope>NUCLEOTIDE SEQUENCE [LARGE SCALE GENOMIC DNA]</scope>
    <source>
        <strain>ATCC 8585 / CBS 2359 / DSM 70799 / NBRC 1267 / NRRL Y-1140 / WM37</strain>
    </source>
</reference>
<feature type="transit peptide" description="Mitochondrion" evidence="2">
    <location>
        <begin position="1"/>
        <end status="unknown"/>
    </location>
</feature>
<feature type="chain" id="PRO_0000405602" description="ATPase expression protein 1, mitochondrial">
    <location>
        <begin status="unknown"/>
        <end position="490"/>
    </location>
</feature>
<sequence length="490" mass="55773">MSILSRAANKLQPGKTLLVPKNKFKVADEEWGHLPEYVVPAANKIVHPFYQYPNATERTALCITERNPKLFNGKPVLPAFVRHPVTSESTLVESRLSFDTVKDVSKWVQRIHKSGDRLFHKVNITSSDSGPKVRKTKLTSESPFVKQLDNFLNSHPQLSFETLDSELSKLFIFHKGQEVIYLEEIFLYILQRDNLTVPQWKATLKTLPKYVGKEIDDIDMLNTLLIQWVLSGEQLFTKIDTPALNLLWNVIKSSRESLNQNIITNLNNVQLDKLFDTFLKGKDIKVSRILLETLASRRIMPSLPSIEEYIELVGQAGQETDAGIVPLERKSKLYLLHVLSPVFASNLTCRMTDLLLPYCIHQSEIFALLDLALKSKYSKDIAKSCVNNFVLRIAQLKDSQVDNSLNISSLYYRIKAYNNGTVPNANLLAFIIALLTNSNFRAVQTIINEQPVKEITKVIEVVKNQTTFIDQFGFTGVDRETLLHFLNNRA</sequence>
<organism>
    <name type="scientific">Kluyveromyces lactis (strain ATCC 8585 / CBS 2359 / DSM 70799 / NBRC 1267 / NRRL Y-1140 / WM37)</name>
    <name type="common">Yeast</name>
    <name type="synonym">Candida sphaerica</name>
    <dbReference type="NCBI Taxonomy" id="284590"/>
    <lineage>
        <taxon>Eukaryota</taxon>
        <taxon>Fungi</taxon>
        <taxon>Dikarya</taxon>
        <taxon>Ascomycota</taxon>
        <taxon>Saccharomycotina</taxon>
        <taxon>Saccharomycetes</taxon>
        <taxon>Saccharomycetales</taxon>
        <taxon>Saccharomycetaceae</taxon>
        <taxon>Kluyveromyces</taxon>
    </lineage>
</organism>
<keyword id="KW-0496">Mitochondrion</keyword>
<keyword id="KW-1185">Reference proteome</keyword>
<keyword id="KW-0809">Transit peptide</keyword>
<keyword id="KW-0810">Translation regulation</keyword>
<comment type="function">
    <text evidence="1">Required for translation of the mitochondrial OLI1 transcript encoding subunit 9 of mitochondrial ATP synthase.</text>
</comment>
<comment type="subcellular location">
    <subcellularLocation>
        <location evidence="1">Mitochondrion</location>
    </subcellularLocation>
</comment>
<comment type="similarity">
    <text evidence="3">Belongs to the AEP1 family.</text>
</comment>
<dbReference type="EMBL" id="CR382126">
    <property type="protein sequence ID" value="CAG98955.1"/>
    <property type="molecule type" value="Genomic_DNA"/>
</dbReference>
<dbReference type="RefSeq" id="XP_456247.1">
    <property type="nucleotide sequence ID" value="XM_456247.1"/>
</dbReference>
<dbReference type="FunCoup" id="Q6CIJ2">
    <property type="interactions" value="170"/>
</dbReference>
<dbReference type="PaxDb" id="284590-Q6CIJ2"/>
<dbReference type="KEGG" id="kla:KLLA0_F26202g"/>
<dbReference type="eggNOG" id="ENOG502RXUX">
    <property type="taxonomic scope" value="Eukaryota"/>
</dbReference>
<dbReference type="HOGENOM" id="CLU_035453_0_0_1"/>
<dbReference type="InParanoid" id="Q6CIJ2"/>
<dbReference type="OMA" id="CKVEANE"/>
<dbReference type="Proteomes" id="UP000000598">
    <property type="component" value="Chromosome F"/>
</dbReference>
<dbReference type="GO" id="GO:0005739">
    <property type="term" value="C:mitochondrion"/>
    <property type="evidence" value="ECO:0007669"/>
    <property type="project" value="UniProtKB-SubCell"/>
</dbReference>
<dbReference type="GO" id="GO:0045182">
    <property type="term" value="F:translation regulator activity"/>
    <property type="evidence" value="ECO:0007669"/>
    <property type="project" value="InterPro"/>
</dbReference>
<dbReference type="InterPro" id="IPR031467">
    <property type="entry name" value="Aep1"/>
</dbReference>
<dbReference type="Pfam" id="PF17049">
    <property type="entry name" value="AEP1"/>
    <property type="match status" value="1"/>
</dbReference>
<evidence type="ECO:0000250" key="1"/>
<evidence type="ECO:0000255" key="2"/>
<evidence type="ECO:0000305" key="3"/>
<protein>
    <recommendedName>
        <fullName>ATPase expression protein 1, mitochondrial</fullName>
    </recommendedName>
</protein>
<name>AEP1_KLULA</name>